<reference key="1">
    <citation type="submission" date="2008-05" db="EMBL/GenBank/DDBJ databases">
        <title>Complete sequence of Shigella boydii serotype 18 strain BS512.</title>
        <authorList>
            <person name="Rasko D.A."/>
            <person name="Rosovitz M."/>
            <person name="Maurelli A.T."/>
            <person name="Myers G."/>
            <person name="Seshadri R."/>
            <person name="Cer R."/>
            <person name="Jiang L."/>
            <person name="Ravel J."/>
            <person name="Sebastian Y."/>
        </authorList>
    </citation>
    <scope>NUCLEOTIDE SEQUENCE [LARGE SCALE GENOMIC DNA]</scope>
    <source>
        <strain>CDC 3083-94 / BS512</strain>
    </source>
</reference>
<accession>B2TZ10</accession>
<gene>
    <name evidence="1" type="primary">darP</name>
    <name type="ordered locus">SbBS512_E4850</name>
</gene>
<proteinExistence type="inferred from homology"/>
<organism>
    <name type="scientific">Shigella boydii serotype 18 (strain CDC 3083-94 / BS512)</name>
    <dbReference type="NCBI Taxonomy" id="344609"/>
    <lineage>
        <taxon>Bacteria</taxon>
        <taxon>Pseudomonadati</taxon>
        <taxon>Pseudomonadota</taxon>
        <taxon>Gammaproteobacteria</taxon>
        <taxon>Enterobacterales</taxon>
        <taxon>Enterobacteriaceae</taxon>
        <taxon>Shigella</taxon>
    </lineage>
</organism>
<name>DARP_SHIB3</name>
<feature type="chain" id="PRO_1000198400" description="Dual-action ribosomal maturation protein DarP">
    <location>
        <begin position="1"/>
        <end position="183"/>
    </location>
</feature>
<protein>
    <recommendedName>
        <fullName evidence="1">Dual-action ribosomal maturation protein DarP</fullName>
    </recommendedName>
    <alternativeName>
        <fullName evidence="1">Large ribosomal subunit assembly factor DarP</fullName>
    </alternativeName>
</protein>
<keyword id="KW-0963">Cytoplasm</keyword>
<keyword id="KW-1185">Reference proteome</keyword>
<keyword id="KW-0690">Ribosome biogenesis</keyword>
<keyword id="KW-0694">RNA-binding</keyword>
<keyword id="KW-0699">rRNA-binding</keyword>
<dbReference type="EMBL" id="CP001063">
    <property type="protein sequence ID" value="ACD09817.1"/>
    <property type="molecule type" value="Genomic_DNA"/>
</dbReference>
<dbReference type="SMR" id="B2TZ10"/>
<dbReference type="STRING" id="344609.SbBS512_E4850"/>
<dbReference type="KEGG" id="sbc:SbBS512_E4850"/>
<dbReference type="HOGENOM" id="CLU_106757_2_0_6"/>
<dbReference type="Proteomes" id="UP000001030">
    <property type="component" value="Chromosome"/>
</dbReference>
<dbReference type="GO" id="GO:0005829">
    <property type="term" value="C:cytosol"/>
    <property type="evidence" value="ECO:0007669"/>
    <property type="project" value="TreeGrafter"/>
</dbReference>
<dbReference type="GO" id="GO:0043022">
    <property type="term" value="F:ribosome binding"/>
    <property type="evidence" value="ECO:0007669"/>
    <property type="project" value="UniProtKB-UniRule"/>
</dbReference>
<dbReference type="GO" id="GO:0019843">
    <property type="term" value="F:rRNA binding"/>
    <property type="evidence" value="ECO:0007669"/>
    <property type="project" value="UniProtKB-UniRule"/>
</dbReference>
<dbReference type="GO" id="GO:1902626">
    <property type="term" value="P:assembly of large subunit precursor of preribosome"/>
    <property type="evidence" value="ECO:0007669"/>
    <property type="project" value="UniProtKB-UniRule"/>
</dbReference>
<dbReference type="CDD" id="cd16331">
    <property type="entry name" value="YjgA-like"/>
    <property type="match status" value="1"/>
</dbReference>
<dbReference type="FunFam" id="1.10.60.30:FF:000001">
    <property type="entry name" value="UPF0307 protein YjgA"/>
    <property type="match status" value="1"/>
</dbReference>
<dbReference type="FunFam" id="1.10.60.30:FF:000002">
    <property type="entry name" value="UPF0307 protein YjgA"/>
    <property type="match status" value="1"/>
</dbReference>
<dbReference type="Gene3D" id="1.10.60.30">
    <property type="entry name" value="PSPTO4464-like domains"/>
    <property type="match status" value="2"/>
</dbReference>
<dbReference type="HAMAP" id="MF_00765">
    <property type="entry name" value="DarP"/>
    <property type="match status" value="1"/>
</dbReference>
<dbReference type="InterPro" id="IPR006839">
    <property type="entry name" value="DarP"/>
</dbReference>
<dbReference type="InterPro" id="IPR023153">
    <property type="entry name" value="DarP_sf"/>
</dbReference>
<dbReference type="NCBIfam" id="NF003593">
    <property type="entry name" value="PRK05255.1-1"/>
    <property type="match status" value="1"/>
</dbReference>
<dbReference type="PANTHER" id="PTHR38101">
    <property type="entry name" value="UPF0307 PROTEIN YJGA"/>
    <property type="match status" value="1"/>
</dbReference>
<dbReference type="PANTHER" id="PTHR38101:SF1">
    <property type="entry name" value="UPF0307 PROTEIN YJGA"/>
    <property type="match status" value="1"/>
</dbReference>
<dbReference type="Pfam" id="PF04751">
    <property type="entry name" value="DarP"/>
    <property type="match status" value="1"/>
</dbReference>
<dbReference type="PIRSF" id="PIRSF016183">
    <property type="entry name" value="UCP016183"/>
    <property type="match status" value="1"/>
</dbReference>
<dbReference type="SUPFAM" id="SSF158710">
    <property type="entry name" value="PSPTO4464-like"/>
    <property type="match status" value="1"/>
</dbReference>
<sequence>MTKQPEDWLDDVPGDDIEDEDDEIIWVSKSEIKRDAEELKRLGAEIVDLGKNALDKIPLDADLRAAIELAQRIKMEGRRRQLQLIGKMLRQRDVEPIRQALDKLKNRHNQQVVLFHKLENLRDRLIDQGDDAIAEVLNLWPDADRQQLRTLIRNAKKEKEGNKPPKSARQIFQYLRELAENEE</sequence>
<comment type="function">
    <text evidence="1">Member of a network of 50S ribosomal subunit biogenesis factors which assembles along the 30S-50S interface, preventing incorrect 23S rRNA structures from forming. Promotes peptidyl transferase center (PTC) maturation.</text>
</comment>
<comment type="subcellular location">
    <subcellularLocation>
        <location evidence="1">Cytoplasm</location>
    </subcellularLocation>
    <text evidence="1">Associates with late stage pre-50S ribosomal subunits.</text>
</comment>
<comment type="similarity">
    <text evidence="1">Belongs to the DarP family.</text>
</comment>
<evidence type="ECO:0000255" key="1">
    <source>
        <dbReference type="HAMAP-Rule" id="MF_00765"/>
    </source>
</evidence>